<accession>P36933</accession>
<keyword id="KW-1185">Reference proteome</keyword>
<reference key="1">
    <citation type="journal article" date="1994" name="Virology">
        <title>Molecular cloning and characterization of bacteriophage P2 genes R and S involved in tail completion.</title>
        <authorList>
            <person name="Linderoth N.A."/>
            <person name="Julien B."/>
            <person name="Flick K.E."/>
            <person name="Calendar R."/>
            <person name="Christie G.E."/>
        </authorList>
    </citation>
    <scope>NUCLEOTIDE SEQUENCE [GENOMIC DNA]</scope>
</reference>
<organismHost>
    <name type="scientific">Enterobacteriaceae</name>
    <dbReference type="NCBI Taxonomy" id="543"/>
</organismHost>
<dbReference type="EMBL" id="AF063097">
    <property type="protein sequence ID" value="AAD03279.1"/>
    <property type="molecule type" value="Genomic_DNA"/>
</dbReference>
<dbReference type="RefSeq" id="NP_046768.1">
    <property type="nucleotide sequence ID" value="NC_001895.1"/>
</dbReference>
<dbReference type="GeneID" id="77440800"/>
<dbReference type="KEGG" id="vg:77440800"/>
<dbReference type="Proteomes" id="UP000009092">
    <property type="component" value="Genome"/>
</dbReference>
<dbReference type="InterPro" id="IPR009678">
    <property type="entry name" value="Phage_tail_completion_R"/>
</dbReference>
<dbReference type="Pfam" id="PF06891">
    <property type="entry name" value="P2_Phage_GpR"/>
    <property type="match status" value="1"/>
</dbReference>
<feature type="chain" id="PRO_0000165261" description="Tail completion protein R">
    <location>
        <begin position="1"/>
        <end position="155"/>
    </location>
</feature>
<organism>
    <name type="scientific">Escherichia phage P2</name>
    <name type="common">Bacteriophage P2</name>
    <dbReference type="NCBI Taxonomy" id="2905681"/>
    <lineage>
        <taxon>Viruses</taxon>
        <taxon>Duplodnaviria</taxon>
        <taxon>Heunggongvirae</taxon>
        <taxon>Uroviricota</taxon>
        <taxon>Caudoviricetes</taxon>
        <taxon>Peduoviridae</taxon>
        <taxon>Peduovirus</taxon>
        <taxon>Peduovirus P2</taxon>
    </lineage>
</organism>
<protein>
    <recommendedName>
        <fullName>Tail completion protein R</fullName>
    </recommendedName>
    <alternativeName>
        <fullName>GpR</fullName>
    </alternativeName>
</protein>
<comment type="function">
    <text>It is proposed that R and S are tail completion proteins that are essential for stable head joining.</text>
</comment>
<comment type="similarity">
    <text evidence="1">To phage T4 tail protein GP15.</text>
</comment>
<evidence type="ECO:0000305" key="1"/>
<gene>
    <name type="primary">R</name>
</gene>
<proteinExistence type="predicted"/>
<sequence>MLKPDSLRRALTDAVTVLKTNPDMLRIFVDNGSIASTLAASLSFEKRYTLNVIVTDFTGDFDLLIVPVLAWLRENQPDIMTTDEGQKKGFTFYADINNDSSFDISISLMLTERTLVSEVDGALHVKNISEPPPPEPVTRPMELYINGELVSKWDE</sequence>
<name>VPR_BPP2</name>